<dbReference type="EC" id="3.5.1.2" evidence="1"/>
<dbReference type="EMBL" id="CP000826">
    <property type="protein sequence ID" value="ABV43135.1"/>
    <property type="molecule type" value="Genomic_DNA"/>
</dbReference>
<dbReference type="SMR" id="A8GJ45"/>
<dbReference type="STRING" id="399741.Spro_4040"/>
<dbReference type="KEGG" id="spe:Spro_4040"/>
<dbReference type="eggNOG" id="COG2066">
    <property type="taxonomic scope" value="Bacteria"/>
</dbReference>
<dbReference type="HOGENOM" id="CLU_027932_1_1_6"/>
<dbReference type="OrthoDB" id="9788822at2"/>
<dbReference type="GO" id="GO:0004359">
    <property type="term" value="F:glutaminase activity"/>
    <property type="evidence" value="ECO:0007669"/>
    <property type="project" value="UniProtKB-UniRule"/>
</dbReference>
<dbReference type="GO" id="GO:0006537">
    <property type="term" value="P:glutamate biosynthetic process"/>
    <property type="evidence" value="ECO:0007669"/>
    <property type="project" value="TreeGrafter"/>
</dbReference>
<dbReference type="GO" id="GO:0006543">
    <property type="term" value="P:glutamine catabolic process"/>
    <property type="evidence" value="ECO:0007669"/>
    <property type="project" value="TreeGrafter"/>
</dbReference>
<dbReference type="FunFam" id="3.40.710.10:FF:000005">
    <property type="entry name" value="Glutaminase"/>
    <property type="match status" value="1"/>
</dbReference>
<dbReference type="Gene3D" id="3.40.710.10">
    <property type="entry name" value="DD-peptidase/beta-lactamase superfamily"/>
    <property type="match status" value="1"/>
</dbReference>
<dbReference type="HAMAP" id="MF_00313">
    <property type="entry name" value="Glutaminase"/>
    <property type="match status" value="1"/>
</dbReference>
<dbReference type="InterPro" id="IPR012338">
    <property type="entry name" value="Beta-lactam/transpept-like"/>
</dbReference>
<dbReference type="InterPro" id="IPR015868">
    <property type="entry name" value="Glutaminase"/>
</dbReference>
<dbReference type="NCBIfam" id="TIGR03814">
    <property type="entry name" value="Gln_ase"/>
    <property type="match status" value="1"/>
</dbReference>
<dbReference type="NCBIfam" id="NF002132">
    <property type="entry name" value="PRK00971.1-1"/>
    <property type="match status" value="1"/>
</dbReference>
<dbReference type="NCBIfam" id="NF002133">
    <property type="entry name" value="PRK00971.1-2"/>
    <property type="match status" value="1"/>
</dbReference>
<dbReference type="PANTHER" id="PTHR12544">
    <property type="entry name" value="GLUTAMINASE"/>
    <property type="match status" value="1"/>
</dbReference>
<dbReference type="PANTHER" id="PTHR12544:SF29">
    <property type="entry name" value="GLUTAMINASE"/>
    <property type="match status" value="1"/>
</dbReference>
<dbReference type="Pfam" id="PF04960">
    <property type="entry name" value="Glutaminase"/>
    <property type="match status" value="1"/>
</dbReference>
<dbReference type="SUPFAM" id="SSF56601">
    <property type="entry name" value="beta-lactamase/transpeptidase-like"/>
    <property type="match status" value="1"/>
</dbReference>
<evidence type="ECO:0000255" key="1">
    <source>
        <dbReference type="HAMAP-Rule" id="MF_00313"/>
    </source>
</evidence>
<name>GLSA_SERP5</name>
<keyword id="KW-0378">Hydrolase</keyword>
<gene>
    <name evidence="1" type="primary">glsA</name>
    <name type="ordered locus">Spro_4040</name>
</gene>
<feature type="chain" id="PRO_1000059441" description="Glutaminase">
    <location>
        <begin position="1"/>
        <end position="307"/>
    </location>
</feature>
<feature type="binding site" evidence="1">
    <location>
        <position position="66"/>
    </location>
    <ligand>
        <name>substrate</name>
    </ligand>
</feature>
<feature type="binding site" evidence="1">
    <location>
        <position position="117"/>
    </location>
    <ligand>
        <name>substrate</name>
    </ligand>
</feature>
<feature type="binding site" evidence="1">
    <location>
        <position position="161"/>
    </location>
    <ligand>
        <name>substrate</name>
    </ligand>
</feature>
<feature type="binding site" evidence="1">
    <location>
        <position position="168"/>
    </location>
    <ligand>
        <name>substrate</name>
    </ligand>
</feature>
<feature type="binding site" evidence="1">
    <location>
        <position position="192"/>
    </location>
    <ligand>
        <name>substrate</name>
    </ligand>
</feature>
<feature type="binding site" evidence="1">
    <location>
        <position position="243"/>
    </location>
    <ligand>
        <name>substrate</name>
    </ligand>
</feature>
<feature type="binding site" evidence="1">
    <location>
        <position position="261"/>
    </location>
    <ligand>
        <name>substrate</name>
    </ligand>
</feature>
<comment type="catalytic activity">
    <reaction evidence="1">
        <text>L-glutamine + H2O = L-glutamate + NH4(+)</text>
        <dbReference type="Rhea" id="RHEA:15889"/>
        <dbReference type="ChEBI" id="CHEBI:15377"/>
        <dbReference type="ChEBI" id="CHEBI:28938"/>
        <dbReference type="ChEBI" id="CHEBI:29985"/>
        <dbReference type="ChEBI" id="CHEBI:58359"/>
        <dbReference type="EC" id="3.5.1.2"/>
    </reaction>
</comment>
<comment type="subunit">
    <text evidence="1">Homotetramer.</text>
</comment>
<comment type="similarity">
    <text evidence="1">Belongs to the glutaminase family.</text>
</comment>
<proteinExistence type="inferred from homology"/>
<organism>
    <name type="scientific">Serratia proteamaculans (strain 568)</name>
    <dbReference type="NCBI Taxonomy" id="399741"/>
    <lineage>
        <taxon>Bacteria</taxon>
        <taxon>Pseudomonadati</taxon>
        <taxon>Pseudomonadota</taxon>
        <taxon>Gammaproteobacteria</taxon>
        <taxon>Enterobacterales</taxon>
        <taxon>Yersiniaceae</taxon>
        <taxon>Serratia</taxon>
    </lineage>
</organism>
<accession>A8GJ45</accession>
<protein>
    <recommendedName>
        <fullName evidence="1">Glutaminase</fullName>
        <ecNumber evidence="1">3.5.1.2</ecNumber>
    </recommendedName>
</protein>
<sequence length="307" mass="33676">MVTTLDNALLEEILQQVRPLIGQGKVADYIPALAEVASDRLAIAVCTVDGEIFQAGNATERFSIQSISKVLSLTLALTRYQEHEIWQRVGKEPSGLPFNSLLQLEMEQGKPRNPFINPGALVVCDMLQTRLSAPKQRMLEVVRQLAGEEDLAYDSRVARSEFEHSDRNAAIAYLMKSFGNFENDVLTVLQTYFHYCALRMSCLELARSFVYLANHGRDLSGREVISPLQARQINALMMTSGMYDGAGEFAYRVGMPGKSGVGGGIVAIVPDELSIAVWSPELDASGNSLAGTAALELLSQRISRSIF</sequence>
<reference key="1">
    <citation type="submission" date="2007-09" db="EMBL/GenBank/DDBJ databases">
        <title>Complete sequence of chromosome of Serratia proteamaculans 568.</title>
        <authorList>
            <consortium name="US DOE Joint Genome Institute"/>
            <person name="Copeland A."/>
            <person name="Lucas S."/>
            <person name="Lapidus A."/>
            <person name="Barry K."/>
            <person name="Glavina del Rio T."/>
            <person name="Dalin E."/>
            <person name="Tice H."/>
            <person name="Pitluck S."/>
            <person name="Chain P."/>
            <person name="Malfatti S."/>
            <person name="Shin M."/>
            <person name="Vergez L."/>
            <person name="Schmutz J."/>
            <person name="Larimer F."/>
            <person name="Land M."/>
            <person name="Hauser L."/>
            <person name="Kyrpides N."/>
            <person name="Kim E."/>
            <person name="Taghavi S."/>
            <person name="Newman L."/>
            <person name="Vangronsveld J."/>
            <person name="van der Lelie D."/>
            <person name="Richardson P."/>
        </authorList>
    </citation>
    <scope>NUCLEOTIDE SEQUENCE [LARGE SCALE GENOMIC DNA]</scope>
    <source>
        <strain>568</strain>
    </source>
</reference>